<dbReference type="EC" id="2.7.7.23" evidence="1"/>
<dbReference type="EC" id="2.3.1.157" evidence="1"/>
<dbReference type="EMBL" id="CP001161">
    <property type="protein sequence ID" value="ACL30412.1"/>
    <property type="molecule type" value="Genomic_DNA"/>
</dbReference>
<dbReference type="RefSeq" id="WP_009873988.1">
    <property type="nucleotide sequence ID" value="NC_011833.1"/>
</dbReference>
<dbReference type="SMR" id="B8D8J0"/>
<dbReference type="KEGG" id="bap:BUAP5A_027"/>
<dbReference type="HOGENOM" id="CLU_029499_15_2_6"/>
<dbReference type="OrthoDB" id="9775031at2"/>
<dbReference type="UniPathway" id="UPA00113">
    <property type="reaction ID" value="UER00532"/>
</dbReference>
<dbReference type="UniPathway" id="UPA00113">
    <property type="reaction ID" value="UER00533"/>
</dbReference>
<dbReference type="UniPathway" id="UPA00973"/>
<dbReference type="Proteomes" id="UP000006904">
    <property type="component" value="Chromosome"/>
</dbReference>
<dbReference type="GO" id="GO:0005737">
    <property type="term" value="C:cytoplasm"/>
    <property type="evidence" value="ECO:0007669"/>
    <property type="project" value="UniProtKB-SubCell"/>
</dbReference>
<dbReference type="GO" id="GO:0016020">
    <property type="term" value="C:membrane"/>
    <property type="evidence" value="ECO:0007669"/>
    <property type="project" value="GOC"/>
</dbReference>
<dbReference type="GO" id="GO:0019134">
    <property type="term" value="F:glucosamine-1-phosphate N-acetyltransferase activity"/>
    <property type="evidence" value="ECO:0007669"/>
    <property type="project" value="UniProtKB-UniRule"/>
</dbReference>
<dbReference type="GO" id="GO:0000287">
    <property type="term" value="F:magnesium ion binding"/>
    <property type="evidence" value="ECO:0007669"/>
    <property type="project" value="UniProtKB-UniRule"/>
</dbReference>
<dbReference type="GO" id="GO:0003977">
    <property type="term" value="F:UDP-N-acetylglucosamine diphosphorylase activity"/>
    <property type="evidence" value="ECO:0007669"/>
    <property type="project" value="UniProtKB-UniRule"/>
</dbReference>
<dbReference type="GO" id="GO:0000902">
    <property type="term" value="P:cell morphogenesis"/>
    <property type="evidence" value="ECO:0007669"/>
    <property type="project" value="UniProtKB-UniRule"/>
</dbReference>
<dbReference type="GO" id="GO:0071555">
    <property type="term" value="P:cell wall organization"/>
    <property type="evidence" value="ECO:0007669"/>
    <property type="project" value="UniProtKB-KW"/>
</dbReference>
<dbReference type="GO" id="GO:0009245">
    <property type="term" value="P:lipid A biosynthetic process"/>
    <property type="evidence" value="ECO:0007669"/>
    <property type="project" value="UniProtKB-UniRule"/>
</dbReference>
<dbReference type="GO" id="GO:0009252">
    <property type="term" value="P:peptidoglycan biosynthetic process"/>
    <property type="evidence" value="ECO:0007669"/>
    <property type="project" value="UniProtKB-UniRule"/>
</dbReference>
<dbReference type="GO" id="GO:0008360">
    <property type="term" value="P:regulation of cell shape"/>
    <property type="evidence" value="ECO:0007669"/>
    <property type="project" value="UniProtKB-KW"/>
</dbReference>
<dbReference type="GO" id="GO:0006048">
    <property type="term" value="P:UDP-N-acetylglucosamine biosynthetic process"/>
    <property type="evidence" value="ECO:0007669"/>
    <property type="project" value="UniProtKB-UniPathway"/>
</dbReference>
<dbReference type="CDD" id="cd02540">
    <property type="entry name" value="GT2_GlmU_N_bac"/>
    <property type="match status" value="1"/>
</dbReference>
<dbReference type="CDD" id="cd03353">
    <property type="entry name" value="LbH_GlmU_C"/>
    <property type="match status" value="1"/>
</dbReference>
<dbReference type="Gene3D" id="2.160.10.10">
    <property type="entry name" value="Hexapeptide repeat proteins"/>
    <property type="match status" value="1"/>
</dbReference>
<dbReference type="Gene3D" id="3.90.550.10">
    <property type="entry name" value="Spore Coat Polysaccharide Biosynthesis Protein SpsA, Chain A"/>
    <property type="match status" value="1"/>
</dbReference>
<dbReference type="HAMAP" id="MF_01631">
    <property type="entry name" value="GlmU"/>
    <property type="match status" value="1"/>
</dbReference>
<dbReference type="InterPro" id="IPR005882">
    <property type="entry name" value="Bifunctional_GlmU"/>
</dbReference>
<dbReference type="InterPro" id="IPR050065">
    <property type="entry name" value="GlmU-like"/>
</dbReference>
<dbReference type="InterPro" id="IPR038009">
    <property type="entry name" value="GlmU_C_LbH"/>
</dbReference>
<dbReference type="InterPro" id="IPR001451">
    <property type="entry name" value="Hexapep"/>
</dbReference>
<dbReference type="InterPro" id="IPR018357">
    <property type="entry name" value="Hexapep_transf_CS"/>
</dbReference>
<dbReference type="InterPro" id="IPR025877">
    <property type="entry name" value="MobA-like_NTP_Trfase"/>
</dbReference>
<dbReference type="InterPro" id="IPR029044">
    <property type="entry name" value="Nucleotide-diphossugar_trans"/>
</dbReference>
<dbReference type="InterPro" id="IPR011004">
    <property type="entry name" value="Trimer_LpxA-like_sf"/>
</dbReference>
<dbReference type="NCBIfam" id="TIGR01173">
    <property type="entry name" value="glmU"/>
    <property type="match status" value="1"/>
</dbReference>
<dbReference type="PANTHER" id="PTHR43584:SF3">
    <property type="entry name" value="BIFUNCTIONAL PROTEIN GLMU"/>
    <property type="match status" value="1"/>
</dbReference>
<dbReference type="PANTHER" id="PTHR43584">
    <property type="entry name" value="NUCLEOTIDYL TRANSFERASE"/>
    <property type="match status" value="1"/>
</dbReference>
<dbReference type="Pfam" id="PF00132">
    <property type="entry name" value="Hexapep"/>
    <property type="match status" value="3"/>
</dbReference>
<dbReference type="Pfam" id="PF12804">
    <property type="entry name" value="NTP_transf_3"/>
    <property type="match status" value="1"/>
</dbReference>
<dbReference type="SUPFAM" id="SSF53448">
    <property type="entry name" value="Nucleotide-diphospho-sugar transferases"/>
    <property type="match status" value="1"/>
</dbReference>
<dbReference type="SUPFAM" id="SSF51161">
    <property type="entry name" value="Trimeric LpxA-like enzymes"/>
    <property type="match status" value="1"/>
</dbReference>
<dbReference type="PROSITE" id="PS00101">
    <property type="entry name" value="HEXAPEP_TRANSFERASES"/>
    <property type="match status" value="1"/>
</dbReference>
<feature type="chain" id="PRO_1000186412" description="Bifunctional protein GlmU">
    <location>
        <begin position="1"/>
        <end position="459"/>
    </location>
</feature>
<feature type="region of interest" description="Pyrophosphorylase" evidence="1">
    <location>
        <begin position="1"/>
        <end position="229"/>
    </location>
</feature>
<feature type="region of interest" description="Linker" evidence="1">
    <location>
        <begin position="230"/>
        <end position="250"/>
    </location>
</feature>
<feature type="region of interest" description="N-acetyltransferase" evidence="1">
    <location>
        <begin position="251"/>
        <end position="459"/>
    </location>
</feature>
<feature type="active site" description="Proton acceptor" evidence="1">
    <location>
        <position position="363"/>
    </location>
</feature>
<feature type="binding site" evidence="1">
    <location>
        <begin position="11"/>
        <end position="14"/>
    </location>
    <ligand>
        <name>UDP-N-acetyl-alpha-D-glucosamine</name>
        <dbReference type="ChEBI" id="CHEBI:57705"/>
    </ligand>
</feature>
<feature type="binding site" evidence="1">
    <location>
        <position position="25"/>
    </location>
    <ligand>
        <name>UDP-N-acetyl-alpha-D-glucosamine</name>
        <dbReference type="ChEBI" id="CHEBI:57705"/>
    </ligand>
</feature>
<feature type="binding site" evidence="1">
    <location>
        <position position="76"/>
    </location>
    <ligand>
        <name>UDP-N-acetyl-alpha-D-glucosamine</name>
        <dbReference type="ChEBI" id="CHEBI:57705"/>
    </ligand>
</feature>
<feature type="binding site" evidence="1">
    <location>
        <begin position="81"/>
        <end position="82"/>
    </location>
    <ligand>
        <name>UDP-N-acetyl-alpha-D-glucosamine</name>
        <dbReference type="ChEBI" id="CHEBI:57705"/>
    </ligand>
</feature>
<feature type="binding site" evidence="1">
    <location>
        <begin position="103"/>
        <end position="105"/>
    </location>
    <ligand>
        <name>UDP-N-acetyl-alpha-D-glucosamine</name>
        <dbReference type="ChEBI" id="CHEBI:57705"/>
    </ligand>
</feature>
<feature type="binding site" evidence="1">
    <location>
        <position position="105"/>
    </location>
    <ligand>
        <name>Mg(2+)</name>
        <dbReference type="ChEBI" id="CHEBI:18420"/>
    </ligand>
</feature>
<feature type="binding site" evidence="1">
    <location>
        <position position="140"/>
    </location>
    <ligand>
        <name>UDP-N-acetyl-alpha-D-glucosamine</name>
        <dbReference type="ChEBI" id="CHEBI:57705"/>
    </ligand>
</feature>
<feature type="binding site" evidence="1">
    <location>
        <position position="154"/>
    </location>
    <ligand>
        <name>UDP-N-acetyl-alpha-D-glucosamine</name>
        <dbReference type="ChEBI" id="CHEBI:57705"/>
    </ligand>
</feature>
<feature type="binding site" evidence="1">
    <location>
        <position position="227"/>
    </location>
    <ligand>
        <name>Mg(2+)</name>
        <dbReference type="ChEBI" id="CHEBI:18420"/>
    </ligand>
</feature>
<feature type="binding site" evidence="1">
    <location>
        <position position="227"/>
    </location>
    <ligand>
        <name>UDP-N-acetyl-alpha-D-glucosamine</name>
        <dbReference type="ChEBI" id="CHEBI:57705"/>
    </ligand>
</feature>
<feature type="binding site" evidence="1">
    <location>
        <position position="333"/>
    </location>
    <ligand>
        <name>UDP-N-acetyl-alpha-D-glucosamine</name>
        <dbReference type="ChEBI" id="CHEBI:57705"/>
    </ligand>
</feature>
<feature type="binding site" evidence="1">
    <location>
        <position position="351"/>
    </location>
    <ligand>
        <name>UDP-N-acetyl-alpha-D-glucosamine</name>
        <dbReference type="ChEBI" id="CHEBI:57705"/>
    </ligand>
</feature>
<feature type="binding site" evidence="1">
    <location>
        <position position="366"/>
    </location>
    <ligand>
        <name>UDP-N-acetyl-alpha-D-glucosamine</name>
        <dbReference type="ChEBI" id="CHEBI:57705"/>
    </ligand>
</feature>
<feature type="binding site" evidence="1">
    <location>
        <position position="377"/>
    </location>
    <ligand>
        <name>UDP-N-acetyl-alpha-D-glucosamine</name>
        <dbReference type="ChEBI" id="CHEBI:57705"/>
    </ligand>
</feature>
<feature type="binding site" evidence="1">
    <location>
        <position position="380"/>
    </location>
    <ligand>
        <name>acetyl-CoA</name>
        <dbReference type="ChEBI" id="CHEBI:57288"/>
    </ligand>
</feature>
<feature type="binding site" evidence="1">
    <location>
        <begin position="386"/>
        <end position="387"/>
    </location>
    <ligand>
        <name>acetyl-CoA</name>
        <dbReference type="ChEBI" id="CHEBI:57288"/>
    </ligand>
</feature>
<feature type="binding site" evidence="1">
    <location>
        <position position="405"/>
    </location>
    <ligand>
        <name>acetyl-CoA</name>
        <dbReference type="ChEBI" id="CHEBI:57288"/>
    </ligand>
</feature>
<feature type="binding site" evidence="1">
    <location>
        <position position="423"/>
    </location>
    <ligand>
        <name>acetyl-CoA</name>
        <dbReference type="ChEBI" id="CHEBI:57288"/>
    </ligand>
</feature>
<sequence length="459" mass="51182">MLTQEIIIVILAAGKGTRMKSNHPKVLHFLGGKTILEHVIETAQSIKPKKIILVYSDQKKPVLSNIYNIPIQWIIQKKPQGTGHAILLAIKKISDNTEILVLYGDVPFISPVSIKKLQKSKKQSKISLLTAKVKNPNGYGRILRKKGKVISIIEDQDASNEQKNIKEIYSGIFIAQSKDLTRWLKKIDKKNEKQEFYATDIIALAHLEGSFIKTIEPLNYEEILGINNKLQLSNLEKIFQKKQINKLLINGVTIKDPSHFIFRGTLQHGQNVEIDTGVILENNVILGDDVKIGPGCIIRNSSIDSNTNIQAYTIIENSKIGKGCIIGPFAHLRSNTLLDRNVHIGNFVETKDTFIKNESKVKHLSYLGNSEIGSKVNIGAGSITCNYDGANKFKTIIGDNVLVGSNTQLIAPIKIAKNTTIAAGTTVTKDVNTPCLVYNTKEQKYKKNWMRSKKIIKKN</sequence>
<reference key="1">
    <citation type="journal article" date="2009" name="Science">
        <title>The dynamics and time scale of ongoing genomic erosion in symbiotic bacteria.</title>
        <authorList>
            <person name="Moran N.A."/>
            <person name="McLaughlin H.J."/>
            <person name="Sorek R."/>
        </authorList>
    </citation>
    <scope>NUCLEOTIDE SEQUENCE [LARGE SCALE GENOMIC DNA]</scope>
    <source>
        <strain>5A</strain>
    </source>
</reference>
<proteinExistence type="inferred from homology"/>
<organism>
    <name type="scientific">Buchnera aphidicola subsp. Acyrthosiphon pisum (strain 5A)</name>
    <dbReference type="NCBI Taxonomy" id="563178"/>
    <lineage>
        <taxon>Bacteria</taxon>
        <taxon>Pseudomonadati</taxon>
        <taxon>Pseudomonadota</taxon>
        <taxon>Gammaproteobacteria</taxon>
        <taxon>Enterobacterales</taxon>
        <taxon>Erwiniaceae</taxon>
        <taxon>Buchnera</taxon>
    </lineage>
</organism>
<evidence type="ECO:0000255" key="1">
    <source>
        <dbReference type="HAMAP-Rule" id="MF_01631"/>
    </source>
</evidence>
<keyword id="KW-0012">Acyltransferase</keyword>
<keyword id="KW-0133">Cell shape</keyword>
<keyword id="KW-0961">Cell wall biogenesis/degradation</keyword>
<keyword id="KW-0963">Cytoplasm</keyword>
<keyword id="KW-0460">Magnesium</keyword>
<keyword id="KW-0479">Metal-binding</keyword>
<keyword id="KW-0511">Multifunctional enzyme</keyword>
<keyword id="KW-0548">Nucleotidyltransferase</keyword>
<keyword id="KW-0573">Peptidoglycan synthesis</keyword>
<keyword id="KW-0677">Repeat</keyword>
<keyword id="KW-0808">Transferase</keyword>
<protein>
    <recommendedName>
        <fullName evidence="1">Bifunctional protein GlmU</fullName>
    </recommendedName>
    <domain>
        <recommendedName>
            <fullName evidence="1">UDP-N-acetylglucosamine pyrophosphorylase</fullName>
            <ecNumber evidence="1">2.7.7.23</ecNumber>
        </recommendedName>
        <alternativeName>
            <fullName evidence="1">N-acetylglucosamine-1-phosphate uridyltransferase</fullName>
        </alternativeName>
    </domain>
    <domain>
        <recommendedName>
            <fullName evidence="1">Glucosamine-1-phosphate N-acetyltransferase</fullName>
            <ecNumber evidence="1">2.3.1.157</ecNumber>
        </recommendedName>
    </domain>
</protein>
<accession>B8D8J0</accession>
<comment type="function">
    <text evidence="1">Catalyzes the last two sequential reactions in the de novo biosynthetic pathway for UDP-N-acetylglucosamine (UDP-GlcNAc). The C-terminal domain catalyzes the transfer of acetyl group from acetyl coenzyme A to glucosamine-1-phosphate (GlcN-1-P) to produce N-acetylglucosamine-1-phosphate (GlcNAc-1-P), which is converted into UDP-GlcNAc by the transfer of uridine 5-monophosphate (from uridine 5-triphosphate), a reaction catalyzed by the N-terminal domain.</text>
</comment>
<comment type="catalytic activity">
    <reaction evidence="1">
        <text>alpha-D-glucosamine 1-phosphate + acetyl-CoA = N-acetyl-alpha-D-glucosamine 1-phosphate + CoA + H(+)</text>
        <dbReference type="Rhea" id="RHEA:13725"/>
        <dbReference type="ChEBI" id="CHEBI:15378"/>
        <dbReference type="ChEBI" id="CHEBI:57287"/>
        <dbReference type="ChEBI" id="CHEBI:57288"/>
        <dbReference type="ChEBI" id="CHEBI:57776"/>
        <dbReference type="ChEBI" id="CHEBI:58516"/>
        <dbReference type="EC" id="2.3.1.157"/>
    </reaction>
</comment>
<comment type="catalytic activity">
    <reaction evidence="1">
        <text>N-acetyl-alpha-D-glucosamine 1-phosphate + UTP + H(+) = UDP-N-acetyl-alpha-D-glucosamine + diphosphate</text>
        <dbReference type="Rhea" id="RHEA:13509"/>
        <dbReference type="ChEBI" id="CHEBI:15378"/>
        <dbReference type="ChEBI" id="CHEBI:33019"/>
        <dbReference type="ChEBI" id="CHEBI:46398"/>
        <dbReference type="ChEBI" id="CHEBI:57705"/>
        <dbReference type="ChEBI" id="CHEBI:57776"/>
        <dbReference type="EC" id="2.7.7.23"/>
    </reaction>
</comment>
<comment type="cofactor">
    <cofactor evidence="1">
        <name>Mg(2+)</name>
        <dbReference type="ChEBI" id="CHEBI:18420"/>
    </cofactor>
    <text evidence="1">Binds 1 Mg(2+) ion per subunit.</text>
</comment>
<comment type="pathway">
    <text evidence="1">Nucleotide-sugar biosynthesis; UDP-N-acetyl-alpha-D-glucosamine biosynthesis; N-acetyl-alpha-D-glucosamine 1-phosphate from alpha-D-glucosamine 6-phosphate (route II): step 2/2.</text>
</comment>
<comment type="pathway">
    <text evidence="1">Nucleotide-sugar biosynthesis; UDP-N-acetyl-alpha-D-glucosamine biosynthesis; UDP-N-acetyl-alpha-D-glucosamine from N-acetyl-alpha-D-glucosamine 1-phosphate: step 1/1.</text>
</comment>
<comment type="pathway">
    <text evidence="1">Bacterial outer membrane biogenesis; LPS lipid A biosynthesis.</text>
</comment>
<comment type="subunit">
    <text evidence="1">Homotrimer.</text>
</comment>
<comment type="subcellular location">
    <subcellularLocation>
        <location evidence="1">Cytoplasm</location>
    </subcellularLocation>
</comment>
<comment type="similarity">
    <text evidence="1">In the N-terminal section; belongs to the N-acetylglucosamine-1-phosphate uridyltransferase family.</text>
</comment>
<comment type="similarity">
    <text evidence="1">In the C-terminal section; belongs to the transferase hexapeptide repeat family.</text>
</comment>
<name>GLMU_BUCA5</name>
<gene>
    <name evidence="1" type="primary">glmU</name>
    <name type="ordered locus">BUAP5A_027</name>
</gene>